<reference key="1">
    <citation type="submission" date="2009-01" db="EMBL/GenBank/DDBJ databases">
        <title>Complete sequence of Anaeromyxobacter dehalogenans 2CP-1.</title>
        <authorList>
            <person name="Lucas S."/>
            <person name="Copeland A."/>
            <person name="Lapidus A."/>
            <person name="Glavina del Rio T."/>
            <person name="Dalin E."/>
            <person name="Tice H."/>
            <person name="Bruce D."/>
            <person name="Goodwin L."/>
            <person name="Pitluck S."/>
            <person name="Saunders E."/>
            <person name="Brettin T."/>
            <person name="Detter J.C."/>
            <person name="Han C."/>
            <person name="Larimer F."/>
            <person name="Land M."/>
            <person name="Hauser L."/>
            <person name="Kyrpides N."/>
            <person name="Ovchinnikova G."/>
            <person name="Beliaev A.S."/>
            <person name="Richardson P."/>
        </authorList>
    </citation>
    <scope>NUCLEOTIDE SEQUENCE [LARGE SCALE GENOMIC DNA]</scope>
    <source>
        <strain>2CP-1 / ATCC BAA-258</strain>
    </source>
</reference>
<feature type="chain" id="PRO_1000118170" description="Ribosomal RNA small subunit methyltransferase G">
    <location>
        <begin position="1"/>
        <end position="215"/>
    </location>
</feature>
<feature type="binding site" evidence="1">
    <location>
        <position position="78"/>
    </location>
    <ligand>
        <name>S-adenosyl-L-methionine</name>
        <dbReference type="ChEBI" id="CHEBI:59789"/>
    </ligand>
</feature>
<feature type="binding site" evidence="1">
    <location>
        <position position="83"/>
    </location>
    <ligand>
        <name>S-adenosyl-L-methionine</name>
        <dbReference type="ChEBI" id="CHEBI:59789"/>
    </ligand>
</feature>
<feature type="binding site" evidence="1">
    <location>
        <begin position="128"/>
        <end position="129"/>
    </location>
    <ligand>
        <name>S-adenosyl-L-methionine</name>
        <dbReference type="ChEBI" id="CHEBI:59789"/>
    </ligand>
</feature>
<feature type="binding site" evidence="1">
    <location>
        <position position="146"/>
    </location>
    <ligand>
        <name>S-adenosyl-L-methionine</name>
        <dbReference type="ChEBI" id="CHEBI:59789"/>
    </ligand>
</feature>
<accession>B8JDK2</accession>
<name>RSMG_ANAD2</name>
<keyword id="KW-0963">Cytoplasm</keyword>
<keyword id="KW-0489">Methyltransferase</keyword>
<keyword id="KW-0698">rRNA processing</keyword>
<keyword id="KW-0949">S-adenosyl-L-methionine</keyword>
<keyword id="KW-0808">Transferase</keyword>
<gene>
    <name evidence="1" type="primary">rsmG</name>
    <name type="ordered locus">A2cp1_4511</name>
</gene>
<comment type="function">
    <text evidence="1">Specifically methylates the N7 position of guanine in position 527 of 16S rRNA.</text>
</comment>
<comment type="catalytic activity">
    <reaction evidence="1">
        <text>guanosine(527) in 16S rRNA + S-adenosyl-L-methionine = N(7)-methylguanosine(527) in 16S rRNA + S-adenosyl-L-homocysteine</text>
        <dbReference type="Rhea" id="RHEA:42732"/>
        <dbReference type="Rhea" id="RHEA-COMP:10209"/>
        <dbReference type="Rhea" id="RHEA-COMP:10210"/>
        <dbReference type="ChEBI" id="CHEBI:57856"/>
        <dbReference type="ChEBI" id="CHEBI:59789"/>
        <dbReference type="ChEBI" id="CHEBI:74269"/>
        <dbReference type="ChEBI" id="CHEBI:74480"/>
        <dbReference type="EC" id="2.1.1.170"/>
    </reaction>
</comment>
<comment type="subcellular location">
    <subcellularLocation>
        <location evidence="1">Cytoplasm</location>
    </subcellularLocation>
</comment>
<comment type="similarity">
    <text evidence="1">Belongs to the methyltransferase superfamily. RNA methyltransferase RsmG family.</text>
</comment>
<evidence type="ECO:0000255" key="1">
    <source>
        <dbReference type="HAMAP-Rule" id="MF_00074"/>
    </source>
</evidence>
<protein>
    <recommendedName>
        <fullName evidence="1">Ribosomal RNA small subunit methyltransferase G</fullName>
        <ecNumber evidence="1">2.1.1.170</ecNumber>
    </recommendedName>
    <alternativeName>
        <fullName evidence="1">16S rRNA 7-methylguanosine methyltransferase</fullName>
        <shortName evidence="1">16S rRNA m7G methyltransferase</shortName>
    </alternativeName>
</protein>
<sequence>MDSAFHEALASGIEALGLPVDEAARALLERYADRLLAWNRKVNLTAITAPAELAEKHLVDSLVLLPFLTGAGTLLDVGSGAGLPGIPLACARRDLSVTCCDGVAKKIAFVKAVSAELDLPVRGVAVRAEGEPEREGLPRADAVVSRALAEPDRWVPVGARYLAEGGTLFAMLGREVDRAGLEAAGAAEGLTLVGLDVYELPVSHAARAVARWQQR</sequence>
<proteinExistence type="inferred from homology"/>
<organism>
    <name type="scientific">Anaeromyxobacter dehalogenans (strain 2CP-1 / ATCC BAA-258)</name>
    <dbReference type="NCBI Taxonomy" id="455488"/>
    <lineage>
        <taxon>Bacteria</taxon>
        <taxon>Pseudomonadati</taxon>
        <taxon>Myxococcota</taxon>
        <taxon>Myxococcia</taxon>
        <taxon>Myxococcales</taxon>
        <taxon>Cystobacterineae</taxon>
        <taxon>Anaeromyxobacteraceae</taxon>
        <taxon>Anaeromyxobacter</taxon>
    </lineage>
</organism>
<dbReference type="EC" id="2.1.1.170" evidence="1"/>
<dbReference type="EMBL" id="CP001359">
    <property type="protein sequence ID" value="ACL67828.1"/>
    <property type="molecule type" value="Genomic_DNA"/>
</dbReference>
<dbReference type="RefSeq" id="WP_015935503.1">
    <property type="nucleotide sequence ID" value="NC_011891.1"/>
</dbReference>
<dbReference type="SMR" id="B8JDK2"/>
<dbReference type="KEGG" id="acp:A2cp1_4511"/>
<dbReference type="HOGENOM" id="CLU_065341_2_0_7"/>
<dbReference type="Proteomes" id="UP000007089">
    <property type="component" value="Chromosome"/>
</dbReference>
<dbReference type="GO" id="GO:0005829">
    <property type="term" value="C:cytosol"/>
    <property type="evidence" value="ECO:0007669"/>
    <property type="project" value="TreeGrafter"/>
</dbReference>
<dbReference type="GO" id="GO:0070043">
    <property type="term" value="F:rRNA (guanine-N7-)-methyltransferase activity"/>
    <property type="evidence" value="ECO:0007669"/>
    <property type="project" value="UniProtKB-UniRule"/>
</dbReference>
<dbReference type="CDD" id="cd02440">
    <property type="entry name" value="AdoMet_MTases"/>
    <property type="match status" value="1"/>
</dbReference>
<dbReference type="Gene3D" id="3.40.50.150">
    <property type="entry name" value="Vaccinia Virus protein VP39"/>
    <property type="match status" value="1"/>
</dbReference>
<dbReference type="HAMAP" id="MF_00074">
    <property type="entry name" value="16SrRNA_methyltr_G"/>
    <property type="match status" value="1"/>
</dbReference>
<dbReference type="InterPro" id="IPR003682">
    <property type="entry name" value="rRNA_ssu_MeTfrase_G"/>
</dbReference>
<dbReference type="InterPro" id="IPR029063">
    <property type="entry name" value="SAM-dependent_MTases_sf"/>
</dbReference>
<dbReference type="NCBIfam" id="TIGR00138">
    <property type="entry name" value="rsmG_gidB"/>
    <property type="match status" value="1"/>
</dbReference>
<dbReference type="PANTHER" id="PTHR31760">
    <property type="entry name" value="S-ADENOSYL-L-METHIONINE-DEPENDENT METHYLTRANSFERASES SUPERFAMILY PROTEIN"/>
    <property type="match status" value="1"/>
</dbReference>
<dbReference type="PANTHER" id="PTHR31760:SF0">
    <property type="entry name" value="S-ADENOSYL-L-METHIONINE-DEPENDENT METHYLTRANSFERASES SUPERFAMILY PROTEIN"/>
    <property type="match status" value="1"/>
</dbReference>
<dbReference type="Pfam" id="PF02527">
    <property type="entry name" value="GidB"/>
    <property type="match status" value="1"/>
</dbReference>
<dbReference type="PIRSF" id="PIRSF003078">
    <property type="entry name" value="GidB"/>
    <property type="match status" value="1"/>
</dbReference>
<dbReference type="SUPFAM" id="SSF53335">
    <property type="entry name" value="S-adenosyl-L-methionine-dependent methyltransferases"/>
    <property type="match status" value="1"/>
</dbReference>